<feature type="chain" id="PRO_0000256003" description="ATP-dependent RNA helicase DBP4">
    <location>
        <begin position="1"/>
        <end position="803"/>
    </location>
</feature>
<feature type="domain" description="Helicase ATP-binding" evidence="2">
    <location>
        <begin position="80"/>
        <end position="256"/>
    </location>
</feature>
<feature type="domain" description="Helicase C-terminal" evidence="3">
    <location>
        <begin position="269"/>
        <end position="441"/>
    </location>
</feature>
<feature type="region of interest" description="Disordered" evidence="4">
    <location>
        <begin position="1"/>
        <end position="32"/>
    </location>
</feature>
<feature type="region of interest" description="Disordered" evidence="4">
    <location>
        <begin position="494"/>
        <end position="531"/>
    </location>
</feature>
<feature type="region of interest" description="Disordered" evidence="4">
    <location>
        <begin position="686"/>
        <end position="803"/>
    </location>
</feature>
<feature type="short sequence motif" description="Q motif">
    <location>
        <begin position="49"/>
        <end position="77"/>
    </location>
</feature>
<feature type="short sequence motif" description="DEAD box">
    <location>
        <begin position="204"/>
        <end position="207"/>
    </location>
</feature>
<feature type="compositionally biased region" description="Basic and acidic residues" evidence="4">
    <location>
        <begin position="522"/>
        <end position="531"/>
    </location>
</feature>
<feature type="compositionally biased region" description="Basic residues" evidence="4">
    <location>
        <begin position="697"/>
        <end position="710"/>
    </location>
</feature>
<feature type="compositionally biased region" description="Acidic residues" evidence="4">
    <location>
        <begin position="715"/>
        <end position="730"/>
    </location>
</feature>
<feature type="compositionally biased region" description="Acidic residues" evidence="4">
    <location>
        <begin position="786"/>
        <end position="795"/>
    </location>
</feature>
<feature type="binding site" evidence="2">
    <location>
        <begin position="93"/>
        <end position="100"/>
    </location>
    <ligand>
        <name>ATP</name>
        <dbReference type="ChEBI" id="CHEBI:30616"/>
    </ligand>
</feature>
<name>DBP4_PHANO</name>
<evidence type="ECO:0000250" key="1"/>
<evidence type="ECO:0000255" key="2">
    <source>
        <dbReference type="PROSITE-ProRule" id="PRU00541"/>
    </source>
</evidence>
<evidence type="ECO:0000255" key="3">
    <source>
        <dbReference type="PROSITE-ProRule" id="PRU00542"/>
    </source>
</evidence>
<evidence type="ECO:0000256" key="4">
    <source>
        <dbReference type="SAM" id="MobiDB-lite"/>
    </source>
</evidence>
<evidence type="ECO:0000305" key="5"/>
<comment type="function">
    <text evidence="1">ATP-dependent RNA helicase required for ribosome biogenesis. Involved in the release of U14 snoRNA in pre-ribosomal complexes. Required for pre-rRNA cleavage at site A2 (By similarity).</text>
</comment>
<comment type="catalytic activity">
    <reaction>
        <text>ATP + H2O = ADP + phosphate + H(+)</text>
        <dbReference type="Rhea" id="RHEA:13065"/>
        <dbReference type="ChEBI" id="CHEBI:15377"/>
        <dbReference type="ChEBI" id="CHEBI:15378"/>
        <dbReference type="ChEBI" id="CHEBI:30616"/>
        <dbReference type="ChEBI" id="CHEBI:43474"/>
        <dbReference type="ChEBI" id="CHEBI:456216"/>
        <dbReference type="EC" id="3.6.4.13"/>
    </reaction>
</comment>
<comment type="subunit">
    <text evidence="1">Interacts with the U3 and U14 snoRNAs. Associates with pre-ribosomal complexes (By similarity).</text>
</comment>
<comment type="subcellular location">
    <subcellularLocation>
        <location evidence="1">Nucleus</location>
        <location evidence="1">Nucleolus</location>
    </subcellularLocation>
</comment>
<comment type="domain">
    <text>The Q motif is unique to and characteristic of the DEAD box family of RNA helicases and controls ATP binding and hydrolysis.</text>
</comment>
<comment type="similarity">
    <text evidence="5">Belongs to the DEAD box helicase family. DDX10/DBP4 subfamily.</text>
</comment>
<proteinExistence type="inferred from homology"/>
<dbReference type="EC" id="3.6.4.13"/>
<dbReference type="EMBL" id="CH445334">
    <property type="protein sequence ID" value="EAT85746.1"/>
    <property type="molecule type" value="Genomic_DNA"/>
</dbReference>
<dbReference type="RefSeq" id="XP_001797448.1">
    <property type="nucleotide sequence ID" value="XM_001797396.1"/>
</dbReference>
<dbReference type="SMR" id="Q0UMB9"/>
<dbReference type="FunCoup" id="Q0UMB9">
    <property type="interactions" value="968"/>
</dbReference>
<dbReference type="STRING" id="321614.Q0UMB9"/>
<dbReference type="EnsemblFungi" id="SNOT_07095">
    <property type="protein sequence ID" value="SNOT_07095"/>
    <property type="gene ID" value="SNOG_07095"/>
</dbReference>
<dbReference type="GeneID" id="5973938"/>
<dbReference type="KEGG" id="pno:SNOG_07095"/>
<dbReference type="VEuPathDB" id="FungiDB:JI435_070950"/>
<dbReference type="eggNOG" id="KOG0343">
    <property type="taxonomic scope" value="Eukaryota"/>
</dbReference>
<dbReference type="HOGENOM" id="CLU_003041_26_1_1"/>
<dbReference type="InParanoid" id="Q0UMB9"/>
<dbReference type="OMA" id="YDKMFER"/>
<dbReference type="OrthoDB" id="10259640at2759"/>
<dbReference type="Proteomes" id="UP000001055">
    <property type="component" value="Unassembled WGS sequence"/>
</dbReference>
<dbReference type="GO" id="GO:0005730">
    <property type="term" value="C:nucleolus"/>
    <property type="evidence" value="ECO:0007669"/>
    <property type="project" value="UniProtKB-SubCell"/>
</dbReference>
<dbReference type="GO" id="GO:0005634">
    <property type="term" value="C:nucleus"/>
    <property type="evidence" value="ECO:0000318"/>
    <property type="project" value="GO_Central"/>
</dbReference>
<dbReference type="GO" id="GO:0032040">
    <property type="term" value="C:small-subunit processome"/>
    <property type="evidence" value="ECO:0007669"/>
    <property type="project" value="EnsemblFungi"/>
</dbReference>
<dbReference type="GO" id="GO:0005524">
    <property type="term" value="F:ATP binding"/>
    <property type="evidence" value="ECO:0007669"/>
    <property type="project" value="UniProtKB-KW"/>
</dbReference>
<dbReference type="GO" id="GO:0016887">
    <property type="term" value="F:ATP hydrolysis activity"/>
    <property type="evidence" value="ECO:0007669"/>
    <property type="project" value="RHEA"/>
</dbReference>
<dbReference type="GO" id="GO:0042802">
    <property type="term" value="F:identical protein binding"/>
    <property type="evidence" value="ECO:0007669"/>
    <property type="project" value="EnsemblFungi"/>
</dbReference>
<dbReference type="GO" id="GO:0003723">
    <property type="term" value="F:RNA binding"/>
    <property type="evidence" value="ECO:0007669"/>
    <property type="project" value="UniProtKB-KW"/>
</dbReference>
<dbReference type="GO" id="GO:0003724">
    <property type="term" value="F:RNA helicase activity"/>
    <property type="evidence" value="ECO:0007669"/>
    <property type="project" value="UniProtKB-EC"/>
</dbReference>
<dbReference type="GO" id="GO:0006364">
    <property type="term" value="P:rRNA processing"/>
    <property type="evidence" value="ECO:0000318"/>
    <property type="project" value="GO_Central"/>
</dbReference>
<dbReference type="CDD" id="cd17941">
    <property type="entry name" value="DEADc_DDX10"/>
    <property type="match status" value="1"/>
</dbReference>
<dbReference type="CDD" id="cd18787">
    <property type="entry name" value="SF2_C_DEAD"/>
    <property type="match status" value="1"/>
</dbReference>
<dbReference type="Gene3D" id="3.40.50.300">
    <property type="entry name" value="P-loop containing nucleotide triphosphate hydrolases"/>
    <property type="match status" value="2"/>
</dbReference>
<dbReference type="InterPro" id="IPR011545">
    <property type="entry name" value="DEAD/DEAH_box_helicase_dom"/>
</dbReference>
<dbReference type="InterPro" id="IPR014001">
    <property type="entry name" value="Helicase_ATP-bd"/>
</dbReference>
<dbReference type="InterPro" id="IPR001650">
    <property type="entry name" value="Helicase_C-like"/>
</dbReference>
<dbReference type="InterPro" id="IPR027417">
    <property type="entry name" value="P-loop_NTPase"/>
</dbReference>
<dbReference type="InterPro" id="IPR000629">
    <property type="entry name" value="RNA-helicase_DEAD-box_CS"/>
</dbReference>
<dbReference type="InterPro" id="IPR014014">
    <property type="entry name" value="RNA_helicase_DEAD_Q_motif"/>
</dbReference>
<dbReference type="InterPro" id="IPR025313">
    <property type="entry name" value="SPB4-like_CTE"/>
</dbReference>
<dbReference type="PANTHER" id="PTHR24031">
    <property type="entry name" value="RNA HELICASE"/>
    <property type="match status" value="1"/>
</dbReference>
<dbReference type="Pfam" id="PF13959">
    <property type="entry name" value="CTE_SPB4"/>
    <property type="match status" value="1"/>
</dbReference>
<dbReference type="Pfam" id="PF00270">
    <property type="entry name" value="DEAD"/>
    <property type="match status" value="1"/>
</dbReference>
<dbReference type="Pfam" id="PF00271">
    <property type="entry name" value="Helicase_C"/>
    <property type="match status" value="1"/>
</dbReference>
<dbReference type="SMART" id="SM00487">
    <property type="entry name" value="DEXDc"/>
    <property type="match status" value="1"/>
</dbReference>
<dbReference type="SMART" id="SM01178">
    <property type="entry name" value="DUF4217"/>
    <property type="match status" value="1"/>
</dbReference>
<dbReference type="SMART" id="SM00490">
    <property type="entry name" value="HELICc"/>
    <property type="match status" value="1"/>
</dbReference>
<dbReference type="SUPFAM" id="SSF52540">
    <property type="entry name" value="P-loop containing nucleoside triphosphate hydrolases"/>
    <property type="match status" value="1"/>
</dbReference>
<dbReference type="PROSITE" id="PS00039">
    <property type="entry name" value="DEAD_ATP_HELICASE"/>
    <property type="match status" value="1"/>
</dbReference>
<dbReference type="PROSITE" id="PS51192">
    <property type="entry name" value="HELICASE_ATP_BIND_1"/>
    <property type="match status" value="1"/>
</dbReference>
<dbReference type="PROSITE" id="PS51194">
    <property type="entry name" value="HELICASE_CTER"/>
    <property type="match status" value="1"/>
</dbReference>
<dbReference type="PROSITE" id="PS51195">
    <property type="entry name" value="Q_MOTIF"/>
    <property type="match status" value="1"/>
</dbReference>
<keyword id="KW-0067">ATP-binding</keyword>
<keyword id="KW-0347">Helicase</keyword>
<keyword id="KW-0378">Hydrolase</keyword>
<keyword id="KW-0547">Nucleotide-binding</keyword>
<keyword id="KW-0539">Nucleus</keyword>
<keyword id="KW-0690">Ribosome biogenesis</keyword>
<keyword id="KW-0694">RNA-binding</keyword>
<keyword id="KW-0698">rRNA processing</keyword>
<gene>
    <name type="primary">DBP4</name>
    <name type="ORF">SNOG_07095</name>
</gene>
<sequence length="803" mass="90190">MGAPGITGRTRPTKVKKQASQQKRKRDDVDVEKLEQAVTELDPKTGTYNDFSDLPLSDPTKQGLKACHFAVMTDIQRKAVPLALKGHDILGAAKTGSGKTLSFIIPVLENLYRLQHVGADAGLGALILSPTRELAIQIFDVLCKIGKHGHMFAAGLLIGGKSLESERQALPRMNILVATPGRMLQHLSQTAAFLVDDLKMLVLDEADRILDMGFQRDVDAIIDYLPKERQTLLFSATQSKKVSDLARLSLQDPEYVSVHAEDKSATPKSLQQNYIICPLEEKLDTLWSFIQASKKSKILVFFSSAKAVRFVYESFRHMQPGIPLLHIHGRQKQGARLDTTAKFSSAKNSCLFATDVAARGLDFPAVDFVIQVDCPDDVDTYIHRVGRTARYNREGRGVLFLAPSEEEGMLKRLEAKKVPVEAINVRQKKRQSIKEQLQNMCFQDPALKYLGQKAFMTYVKSVYLQKDKEVFQLKEYDLEAFAASLGLPGTPRIKFLKDDNSKQKKQASRQTIEVSDSDEEEAPKAEKPVRTKYDRMFERKNQDVLAEHYKKLVRDGDEEISAPANDFSGEATTNGADDDFLAIKRRIPADDEDEDFGGEASVAPGGRVVHLAGASQPLIIDSNRREKLLQSKKKLTKLMDRGKKLVYDDDGNPHEVYELETEADFKAKGLPEHQRQKFIEAAREVVQTADVEDKATARAKRKEKLRKRKERERGEAEDDGDEAVELEDTGENPLANFLADAQYTDDEQEEVEQPKKKEKKWFQSDSEDEEKSSKKKRKKAKQQVVEEPETLEDMEALAAGLLG</sequence>
<reference key="1">
    <citation type="journal article" date="2007" name="Plant Cell">
        <title>Dothideomycete-plant interactions illuminated by genome sequencing and EST analysis of the wheat pathogen Stagonospora nodorum.</title>
        <authorList>
            <person name="Hane J.K."/>
            <person name="Lowe R.G.T."/>
            <person name="Solomon P.S."/>
            <person name="Tan K.-C."/>
            <person name="Schoch C.L."/>
            <person name="Spatafora J.W."/>
            <person name="Crous P.W."/>
            <person name="Kodira C.D."/>
            <person name="Birren B.W."/>
            <person name="Galagan J.E."/>
            <person name="Torriani S.F.F."/>
            <person name="McDonald B.A."/>
            <person name="Oliver R.P."/>
        </authorList>
    </citation>
    <scope>NUCLEOTIDE SEQUENCE [LARGE SCALE GENOMIC DNA]</scope>
    <source>
        <strain>SN15 / ATCC MYA-4574 / FGSC 10173</strain>
    </source>
</reference>
<organism>
    <name type="scientific">Phaeosphaeria nodorum (strain SN15 / ATCC MYA-4574 / FGSC 10173)</name>
    <name type="common">Glume blotch fungus</name>
    <name type="synonym">Parastagonospora nodorum</name>
    <dbReference type="NCBI Taxonomy" id="321614"/>
    <lineage>
        <taxon>Eukaryota</taxon>
        <taxon>Fungi</taxon>
        <taxon>Dikarya</taxon>
        <taxon>Ascomycota</taxon>
        <taxon>Pezizomycotina</taxon>
        <taxon>Dothideomycetes</taxon>
        <taxon>Pleosporomycetidae</taxon>
        <taxon>Pleosporales</taxon>
        <taxon>Pleosporineae</taxon>
        <taxon>Phaeosphaeriaceae</taxon>
        <taxon>Parastagonospora</taxon>
    </lineage>
</organism>
<protein>
    <recommendedName>
        <fullName>ATP-dependent RNA helicase DBP4</fullName>
        <ecNumber>3.6.4.13</ecNumber>
    </recommendedName>
</protein>
<accession>Q0UMB9</accession>